<comment type="function">
    <text evidence="1">Putative deacetylase.</text>
</comment>
<comment type="similarity">
    <text evidence="2">Belongs to the histone deacetylase family.</text>
</comment>
<comment type="sequence caution" evidence="2">
    <conflict type="erroneous initiation">
        <sequence resource="EMBL-CDS" id="CAA78367"/>
    </conflict>
</comment>
<accession>P28606</accession>
<accession>B1XNU3</accession>
<gene>
    <name type="ordered locus">SYNPCC7002_A1628</name>
</gene>
<sequence length="300" mass="33219">MGFPVVYHPDYVTPIPEEHRFPMPKFRLLHGLLLEDGVIQPEQVYQPQLPDRAWLELVHEPDYVTAYCQGTLTPKAQRRIGLPWSAGVVQRTLTAVGGTILTAQLALEHGLACNTAGGTHHAFPGYGSGFCILNDLAIATRTIQQRGLAQRILIVDLDVHQGDGTAFIFQDDPTVFTFSMHCEVNFPSQKQRSDLDLGLPEGLDDDGYLQILAHHLEDLLSQVKPDLVFYDAGVDTHVGDRLGKLAMTNTGLYRRERLVLSTCLAAGYPVACVIGGGYAKNIHDLVYRHSLLHRAARDVY</sequence>
<keyword id="KW-0378">Hydrolase</keyword>
<keyword id="KW-1185">Reference proteome</keyword>
<protein>
    <recommendedName>
        <fullName>Uncharacterized protein SYNPCC7002_A1628</fullName>
    </recommendedName>
</protein>
<feature type="chain" id="PRO_0000114747" description="Uncharacterized protein SYNPCC7002_A1628">
    <location>
        <begin position="1"/>
        <end position="300"/>
    </location>
</feature>
<feature type="sequence conflict" description="In Ref. 1; CAA78367." evidence="2" ref="1">
    <original>VYRHSLLHRAARDVY</original>
    <variation>YIAIPCSIGQRGMFS</variation>
    <location>
        <begin position="286"/>
        <end position="300"/>
    </location>
</feature>
<dbReference type="EMBL" id="Z13965">
    <property type="protein sequence ID" value="CAA78367.1"/>
    <property type="status" value="ALT_INIT"/>
    <property type="molecule type" value="Genomic_DNA"/>
</dbReference>
<dbReference type="EMBL" id="CP000951">
    <property type="protein sequence ID" value="ACA99618.1"/>
    <property type="molecule type" value="Genomic_DNA"/>
</dbReference>
<dbReference type="RefSeq" id="WP_012307241.1">
    <property type="nucleotide sequence ID" value="NZ_JAHHPU010000002.1"/>
</dbReference>
<dbReference type="SMR" id="P28606"/>
<dbReference type="STRING" id="32049.SYNPCC7002_A1628"/>
<dbReference type="KEGG" id="syp:SYNPCC7002_A1628"/>
<dbReference type="eggNOG" id="COG0123">
    <property type="taxonomic scope" value="Bacteria"/>
</dbReference>
<dbReference type="HOGENOM" id="CLU_007727_1_0_3"/>
<dbReference type="Proteomes" id="UP000001688">
    <property type="component" value="Chromosome"/>
</dbReference>
<dbReference type="GO" id="GO:0004407">
    <property type="term" value="F:histone deacetylase activity"/>
    <property type="evidence" value="ECO:0007669"/>
    <property type="project" value="InterPro"/>
</dbReference>
<dbReference type="GO" id="GO:0016787">
    <property type="term" value="F:hydrolase activity"/>
    <property type="evidence" value="ECO:0007669"/>
    <property type="project" value="UniProtKB-KW"/>
</dbReference>
<dbReference type="GO" id="GO:0040029">
    <property type="term" value="P:epigenetic regulation of gene expression"/>
    <property type="evidence" value="ECO:0007669"/>
    <property type="project" value="TreeGrafter"/>
</dbReference>
<dbReference type="CDD" id="cd09993">
    <property type="entry name" value="HDAC_classIV"/>
    <property type="match status" value="1"/>
</dbReference>
<dbReference type="Gene3D" id="3.40.800.20">
    <property type="entry name" value="Histone deacetylase domain"/>
    <property type="match status" value="1"/>
</dbReference>
<dbReference type="InterPro" id="IPR044150">
    <property type="entry name" value="HDAC_classIV"/>
</dbReference>
<dbReference type="InterPro" id="IPR050284">
    <property type="entry name" value="HDAC_PDAC"/>
</dbReference>
<dbReference type="InterPro" id="IPR000286">
    <property type="entry name" value="His_deacetylse"/>
</dbReference>
<dbReference type="InterPro" id="IPR023801">
    <property type="entry name" value="His_deacetylse_dom"/>
</dbReference>
<dbReference type="InterPro" id="IPR037138">
    <property type="entry name" value="His_deacetylse_dom_sf"/>
</dbReference>
<dbReference type="InterPro" id="IPR023696">
    <property type="entry name" value="Ureohydrolase_dom_sf"/>
</dbReference>
<dbReference type="PANTHER" id="PTHR10625:SF19">
    <property type="entry name" value="HISTONE DEACETYLASE 12"/>
    <property type="match status" value="1"/>
</dbReference>
<dbReference type="PANTHER" id="PTHR10625">
    <property type="entry name" value="HISTONE DEACETYLASE HDAC1-RELATED"/>
    <property type="match status" value="1"/>
</dbReference>
<dbReference type="Pfam" id="PF00850">
    <property type="entry name" value="Hist_deacetyl"/>
    <property type="match status" value="1"/>
</dbReference>
<dbReference type="PRINTS" id="PR01270">
    <property type="entry name" value="HDASUPER"/>
</dbReference>
<dbReference type="SUPFAM" id="SSF52768">
    <property type="entry name" value="Arginase/deacetylase"/>
    <property type="match status" value="1"/>
</dbReference>
<proteinExistence type="inferred from homology"/>
<evidence type="ECO:0000250" key="1"/>
<evidence type="ECO:0000305" key="2"/>
<name>Y1628_PICP2</name>
<reference key="1">
    <citation type="journal article" date="1993" name="J. Bacteriol.">
        <title>The glnA gene of the cyanobacterium Agmenellum quadruplicatum PR-6 is nonessential for ammonium assimilation.</title>
        <authorList>
            <person name="Wagner S.J."/>
            <person name="Thomas S.P."/>
            <person name="Kaufman R.I."/>
            <person name="Nixon B.T."/>
            <person name="Stevens S.E. Jr."/>
        </authorList>
    </citation>
    <scope>NUCLEOTIDE SEQUENCE [GENOMIC DNA]</scope>
</reference>
<reference key="2">
    <citation type="submission" date="2008-02" db="EMBL/GenBank/DDBJ databases">
        <title>Complete sequence of Synechococcus sp. PCC 7002.</title>
        <authorList>
            <person name="Li T."/>
            <person name="Zhao J."/>
            <person name="Zhao C."/>
            <person name="Liu Z."/>
            <person name="Zhao F."/>
            <person name="Marquardt J."/>
            <person name="Nomura C.T."/>
            <person name="Persson S."/>
            <person name="Detter J.C."/>
            <person name="Richardson P.M."/>
            <person name="Lanz C."/>
            <person name="Schuster S.C."/>
            <person name="Wang J."/>
            <person name="Li S."/>
            <person name="Huang X."/>
            <person name="Cai T."/>
            <person name="Yu Z."/>
            <person name="Luo J."/>
            <person name="Zhao J."/>
            <person name="Bryant D.A."/>
        </authorList>
    </citation>
    <scope>NUCLEOTIDE SEQUENCE [LARGE SCALE GENOMIC DNA]</scope>
    <source>
        <strain>ATCC 27264 / PCC 7002 / PR-6</strain>
    </source>
</reference>
<organism>
    <name type="scientific">Picosynechococcus sp. (strain ATCC 27264 / PCC 7002 / PR-6)</name>
    <name type="common">Agmenellum quadruplicatum</name>
    <dbReference type="NCBI Taxonomy" id="32049"/>
    <lineage>
        <taxon>Bacteria</taxon>
        <taxon>Bacillati</taxon>
        <taxon>Cyanobacteriota</taxon>
        <taxon>Cyanophyceae</taxon>
        <taxon>Oscillatoriophycideae</taxon>
        <taxon>Chroococcales</taxon>
        <taxon>Geminocystaceae</taxon>
        <taxon>Picosynechococcus</taxon>
    </lineage>
</organism>